<dbReference type="EC" id="2.1.1.-" evidence="1"/>
<dbReference type="EMBL" id="AM711867">
    <property type="protein sequence ID" value="CAN03060.1"/>
    <property type="molecule type" value="Genomic_DNA"/>
</dbReference>
<dbReference type="RefSeq" id="WP_012039660.1">
    <property type="nucleotide sequence ID" value="NC_009480.1"/>
</dbReference>
<dbReference type="SMR" id="A5CVC1"/>
<dbReference type="KEGG" id="cmi:CMM_2973"/>
<dbReference type="eggNOG" id="COG0357">
    <property type="taxonomic scope" value="Bacteria"/>
</dbReference>
<dbReference type="HOGENOM" id="CLU_065341_5_0_11"/>
<dbReference type="OrthoDB" id="9808773at2"/>
<dbReference type="Proteomes" id="UP000001564">
    <property type="component" value="Chromosome"/>
</dbReference>
<dbReference type="GO" id="GO:0005829">
    <property type="term" value="C:cytosol"/>
    <property type="evidence" value="ECO:0007669"/>
    <property type="project" value="TreeGrafter"/>
</dbReference>
<dbReference type="GO" id="GO:0070043">
    <property type="term" value="F:rRNA (guanine-N7-)-methyltransferase activity"/>
    <property type="evidence" value="ECO:0007669"/>
    <property type="project" value="UniProtKB-UniRule"/>
</dbReference>
<dbReference type="Gene3D" id="3.40.50.150">
    <property type="entry name" value="Vaccinia Virus protein VP39"/>
    <property type="match status" value="1"/>
</dbReference>
<dbReference type="HAMAP" id="MF_00074">
    <property type="entry name" value="16SrRNA_methyltr_G"/>
    <property type="match status" value="1"/>
</dbReference>
<dbReference type="InterPro" id="IPR003682">
    <property type="entry name" value="rRNA_ssu_MeTfrase_G"/>
</dbReference>
<dbReference type="InterPro" id="IPR029063">
    <property type="entry name" value="SAM-dependent_MTases_sf"/>
</dbReference>
<dbReference type="NCBIfam" id="TIGR00138">
    <property type="entry name" value="rsmG_gidB"/>
    <property type="match status" value="1"/>
</dbReference>
<dbReference type="PANTHER" id="PTHR31760">
    <property type="entry name" value="S-ADENOSYL-L-METHIONINE-DEPENDENT METHYLTRANSFERASES SUPERFAMILY PROTEIN"/>
    <property type="match status" value="1"/>
</dbReference>
<dbReference type="PANTHER" id="PTHR31760:SF0">
    <property type="entry name" value="S-ADENOSYL-L-METHIONINE-DEPENDENT METHYLTRANSFERASES SUPERFAMILY PROTEIN"/>
    <property type="match status" value="1"/>
</dbReference>
<dbReference type="Pfam" id="PF02527">
    <property type="entry name" value="GidB"/>
    <property type="match status" value="1"/>
</dbReference>
<dbReference type="SUPFAM" id="SSF53335">
    <property type="entry name" value="S-adenosyl-L-methionine-dependent methyltransferases"/>
    <property type="match status" value="1"/>
</dbReference>
<accession>A5CVC1</accession>
<protein>
    <recommendedName>
        <fullName evidence="1">Ribosomal RNA small subunit methyltransferase G</fullName>
        <ecNumber evidence="1">2.1.1.-</ecNumber>
    </recommendedName>
    <alternativeName>
        <fullName evidence="1">16S rRNA 7-methylguanosine methyltransferase</fullName>
        <shortName evidence="1">16S rRNA m7G methyltransferase</shortName>
    </alternativeName>
</protein>
<feature type="chain" id="PRO_1000010134" description="Ribosomal RNA small subunit methyltransferase G">
    <location>
        <begin position="1"/>
        <end position="211"/>
    </location>
</feature>
<feature type="binding site" evidence="1">
    <location>
        <position position="74"/>
    </location>
    <ligand>
        <name>S-adenosyl-L-methionine</name>
        <dbReference type="ChEBI" id="CHEBI:59789"/>
    </ligand>
</feature>
<feature type="binding site" evidence="1">
    <location>
        <position position="79"/>
    </location>
    <ligand>
        <name>S-adenosyl-L-methionine</name>
        <dbReference type="ChEBI" id="CHEBI:59789"/>
    </ligand>
</feature>
<feature type="binding site" evidence="1">
    <location>
        <begin position="125"/>
        <end position="126"/>
    </location>
    <ligand>
        <name>S-adenosyl-L-methionine</name>
        <dbReference type="ChEBI" id="CHEBI:59789"/>
    </ligand>
</feature>
<feature type="binding site" evidence="1">
    <location>
        <position position="140"/>
    </location>
    <ligand>
        <name>S-adenosyl-L-methionine</name>
        <dbReference type="ChEBI" id="CHEBI:59789"/>
    </ligand>
</feature>
<gene>
    <name evidence="1" type="primary">rsmG</name>
    <name type="ordered locus">CMM_2973</name>
</gene>
<sequence>MPEPIIIEPEPAVAGSLFGDRIDVAREFTAQLGQRGEELGLIGPLEPPRLWSRHVINSVLVAPLLRPGLVGDIGTGAGLPGLVLAIARPDVDFVLIEPMERRVAWLEEQVAHLALGNVSVRRARAEEVAQEFNLDQVTARAVSAFAKLIPLTVPLVKTGGELVLMKGSNAEREVEAASKAIRKYHLEDVEVITLGSGQVDEVTRVVRARVA</sequence>
<comment type="function">
    <text evidence="1">Specifically methylates the N7 position of guanine in position 518 of 16S rRNA.</text>
</comment>
<comment type="subcellular location">
    <subcellularLocation>
        <location evidence="1">Cytoplasm</location>
    </subcellularLocation>
</comment>
<comment type="similarity">
    <text evidence="1">Belongs to the methyltransferase superfamily. RNA methyltransferase RsmG family.</text>
</comment>
<proteinExistence type="inferred from homology"/>
<evidence type="ECO:0000255" key="1">
    <source>
        <dbReference type="HAMAP-Rule" id="MF_00074"/>
    </source>
</evidence>
<keyword id="KW-0963">Cytoplasm</keyword>
<keyword id="KW-0489">Methyltransferase</keyword>
<keyword id="KW-0698">rRNA processing</keyword>
<keyword id="KW-0949">S-adenosyl-L-methionine</keyword>
<keyword id="KW-0808">Transferase</keyword>
<reference key="1">
    <citation type="journal article" date="2008" name="J. Bacteriol.">
        <title>The genome sequence of the tomato-pathogenic actinomycete Clavibacter michiganensis subsp. michiganensis NCPPB382 reveals a large island involved in pathogenicity.</title>
        <authorList>
            <person name="Gartemann K.-H."/>
            <person name="Abt B."/>
            <person name="Bekel T."/>
            <person name="Burger A."/>
            <person name="Engemann J."/>
            <person name="Fluegel M."/>
            <person name="Gaigalat L."/>
            <person name="Goesmann A."/>
            <person name="Graefen I."/>
            <person name="Kalinowski J."/>
            <person name="Kaup O."/>
            <person name="Kirchner O."/>
            <person name="Krause L."/>
            <person name="Linke B."/>
            <person name="McHardy A."/>
            <person name="Meyer F."/>
            <person name="Pohle S."/>
            <person name="Rueckert C."/>
            <person name="Schneiker S."/>
            <person name="Zellermann E.-M."/>
            <person name="Puehler A."/>
            <person name="Eichenlaub R."/>
            <person name="Kaiser O."/>
            <person name="Bartels D."/>
        </authorList>
    </citation>
    <scope>NUCLEOTIDE SEQUENCE [LARGE SCALE GENOMIC DNA]</scope>
    <source>
        <strain>NCPPB 382</strain>
    </source>
</reference>
<name>RSMG_CLAM3</name>
<organism>
    <name type="scientific">Clavibacter michiganensis subsp. michiganensis (strain NCPPB 382)</name>
    <dbReference type="NCBI Taxonomy" id="443906"/>
    <lineage>
        <taxon>Bacteria</taxon>
        <taxon>Bacillati</taxon>
        <taxon>Actinomycetota</taxon>
        <taxon>Actinomycetes</taxon>
        <taxon>Micrococcales</taxon>
        <taxon>Microbacteriaceae</taxon>
        <taxon>Clavibacter</taxon>
    </lineage>
</organism>